<dbReference type="EMBL" id="CR936257">
    <property type="protein sequence ID" value="CAI48264.1"/>
    <property type="molecule type" value="Genomic_DNA"/>
</dbReference>
<dbReference type="RefSeq" id="WP_011321902.1">
    <property type="nucleotide sequence ID" value="NC_007426.1"/>
</dbReference>
<dbReference type="SMR" id="Q3IUB7"/>
<dbReference type="STRING" id="348780.NP_0346A"/>
<dbReference type="EnsemblBacteria" id="CAI48264">
    <property type="protein sequence ID" value="CAI48264"/>
    <property type="gene ID" value="NP_0346A"/>
</dbReference>
<dbReference type="GeneID" id="3702668"/>
<dbReference type="KEGG" id="nph:NP_0346A"/>
<dbReference type="eggNOG" id="arCOG02846">
    <property type="taxonomic scope" value="Archaea"/>
</dbReference>
<dbReference type="HOGENOM" id="CLU_017633_0_7_2"/>
<dbReference type="OrthoDB" id="8967at2157"/>
<dbReference type="Proteomes" id="UP000002698">
    <property type="component" value="Chromosome"/>
</dbReference>
<dbReference type="GO" id="GO:0005737">
    <property type="term" value="C:cytoplasm"/>
    <property type="evidence" value="ECO:0007669"/>
    <property type="project" value="UniProtKB-SubCell"/>
</dbReference>
<dbReference type="GO" id="GO:0005524">
    <property type="term" value="F:ATP binding"/>
    <property type="evidence" value="ECO:0007669"/>
    <property type="project" value="InterPro"/>
</dbReference>
<dbReference type="GO" id="GO:0031072">
    <property type="term" value="F:heat shock protein binding"/>
    <property type="evidence" value="ECO:0007669"/>
    <property type="project" value="InterPro"/>
</dbReference>
<dbReference type="GO" id="GO:0051082">
    <property type="term" value="F:unfolded protein binding"/>
    <property type="evidence" value="ECO:0007669"/>
    <property type="project" value="UniProtKB-UniRule"/>
</dbReference>
<dbReference type="GO" id="GO:0008270">
    <property type="term" value="F:zinc ion binding"/>
    <property type="evidence" value="ECO:0007669"/>
    <property type="project" value="UniProtKB-UniRule"/>
</dbReference>
<dbReference type="GO" id="GO:0051085">
    <property type="term" value="P:chaperone cofactor-dependent protein refolding"/>
    <property type="evidence" value="ECO:0007669"/>
    <property type="project" value="TreeGrafter"/>
</dbReference>
<dbReference type="GO" id="GO:0006260">
    <property type="term" value="P:DNA replication"/>
    <property type="evidence" value="ECO:0007669"/>
    <property type="project" value="UniProtKB-KW"/>
</dbReference>
<dbReference type="GO" id="GO:0042026">
    <property type="term" value="P:protein refolding"/>
    <property type="evidence" value="ECO:0007669"/>
    <property type="project" value="TreeGrafter"/>
</dbReference>
<dbReference type="GO" id="GO:0009408">
    <property type="term" value="P:response to heat"/>
    <property type="evidence" value="ECO:0007669"/>
    <property type="project" value="InterPro"/>
</dbReference>
<dbReference type="CDD" id="cd06257">
    <property type="entry name" value="DnaJ"/>
    <property type="match status" value="1"/>
</dbReference>
<dbReference type="CDD" id="cd10747">
    <property type="entry name" value="DnaJ_C"/>
    <property type="match status" value="1"/>
</dbReference>
<dbReference type="CDD" id="cd10719">
    <property type="entry name" value="DnaJ_zf"/>
    <property type="match status" value="1"/>
</dbReference>
<dbReference type="FunFam" id="2.10.230.10:FF:000002">
    <property type="entry name" value="Molecular chaperone DnaJ"/>
    <property type="match status" value="1"/>
</dbReference>
<dbReference type="FunFam" id="2.60.260.20:FF:000004">
    <property type="entry name" value="Molecular chaperone DnaJ"/>
    <property type="match status" value="1"/>
</dbReference>
<dbReference type="Gene3D" id="1.10.287.110">
    <property type="entry name" value="DnaJ domain"/>
    <property type="match status" value="1"/>
</dbReference>
<dbReference type="Gene3D" id="2.10.230.10">
    <property type="entry name" value="Heat shock protein DnaJ, cysteine-rich domain"/>
    <property type="match status" value="1"/>
</dbReference>
<dbReference type="Gene3D" id="2.60.260.20">
    <property type="entry name" value="Urease metallochaperone UreE, N-terminal domain"/>
    <property type="match status" value="2"/>
</dbReference>
<dbReference type="HAMAP" id="MF_01152">
    <property type="entry name" value="DnaJ"/>
    <property type="match status" value="1"/>
</dbReference>
<dbReference type="InterPro" id="IPR012724">
    <property type="entry name" value="DnaJ"/>
</dbReference>
<dbReference type="InterPro" id="IPR002939">
    <property type="entry name" value="DnaJ_C"/>
</dbReference>
<dbReference type="InterPro" id="IPR001623">
    <property type="entry name" value="DnaJ_domain"/>
</dbReference>
<dbReference type="InterPro" id="IPR008971">
    <property type="entry name" value="HSP40/DnaJ_pept-bd"/>
</dbReference>
<dbReference type="InterPro" id="IPR001305">
    <property type="entry name" value="HSP_DnaJ_Cys-rich_dom"/>
</dbReference>
<dbReference type="InterPro" id="IPR036410">
    <property type="entry name" value="HSP_DnaJ_Cys-rich_dom_sf"/>
</dbReference>
<dbReference type="InterPro" id="IPR036869">
    <property type="entry name" value="J_dom_sf"/>
</dbReference>
<dbReference type="NCBIfam" id="TIGR02349">
    <property type="entry name" value="DnaJ_bact"/>
    <property type="match status" value="1"/>
</dbReference>
<dbReference type="NCBIfam" id="NF008035">
    <property type="entry name" value="PRK10767.1"/>
    <property type="match status" value="1"/>
</dbReference>
<dbReference type="PANTHER" id="PTHR43096">
    <property type="entry name" value="DNAJ HOMOLOG 1, MITOCHONDRIAL-RELATED"/>
    <property type="match status" value="1"/>
</dbReference>
<dbReference type="PANTHER" id="PTHR43096:SF52">
    <property type="entry name" value="DNAJ HOMOLOG 1, MITOCHONDRIAL-RELATED"/>
    <property type="match status" value="1"/>
</dbReference>
<dbReference type="Pfam" id="PF00226">
    <property type="entry name" value="DnaJ"/>
    <property type="match status" value="1"/>
</dbReference>
<dbReference type="Pfam" id="PF01556">
    <property type="entry name" value="DnaJ_C"/>
    <property type="match status" value="1"/>
</dbReference>
<dbReference type="Pfam" id="PF00684">
    <property type="entry name" value="DnaJ_CXXCXGXG"/>
    <property type="match status" value="1"/>
</dbReference>
<dbReference type="PRINTS" id="PR00625">
    <property type="entry name" value="JDOMAIN"/>
</dbReference>
<dbReference type="SMART" id="SM00271">
    <property type="entry name" value="DnaJ"/>
    <property type="match status" value="1"/>
</dbReference>
<dbReference type="SUPFAM" id="SSF46565">
    <property type="entry name" value="Chaperone J-domain"/>
    <property type="match status" value="1"/>
</dbReference>
<dbReference type="SUPFAM" id="SSF57938">
    <property type="entry name" value="DnaJ/Hsp40 cysteine-rich domain"/>
    <property type="match status" value="1"/>
</dbReference>
<dbReference type="SUPFAM" id="SSF49493">
    <property type="entry name" value="HSP40/DnaJ peptide-binding domain"/>
    <property type="match status" value="2"/>
</dbReference>
<dbReference type="PROSITE" id="PS50076">
    <property type="entry name" value="DNAJ_2"/>
    <property type="match status" value="1"/>
</dbReference>
<dbReference type="PROSITE" id="PS51188">
    <property type="entry name" value="ZF_CR"/>
    <property type="match status" value="1"/>
</dbReference>
<evidence type="ECO:0000255" key="1">
    <source>
        <dbReference type="HAMAP-Rule" id="MF_01152"/>
    </source>
</evidence>
<evidence type="ECO:0000256" key="2">
    <source>
        <dbReference type="SAM" id="MobiDB-lite"/>
    </source>
</evidence>
<organism>
    <name type="scientific">Natronomonas pharaonis (strain ATCC 35678 / DSM 2160 / CIP 103997 / JCM 8858 / NBRC 14720 / NCIMB 2260 / Gabara)</name>
    <name type="common">Halobacterium pharaonis</name>
    <dbReference type="NCBI Taxonomy" id="348780"/>
    <lineage>
        <taxon>Archaea</taxon>
        <taxon>Methanobacteriati</taxon>
        <taxon>Methanobacteriota</taxon>
        <taxon>Stenosarchaea group</taxon>
        <taxon>Halobacteria</taxon>
        <taxon>Halobacteriales</taxon>
        <taxon>Haloarculaceae</taxon>
        <taxon>Natronomonas</taxon>
    </lineage>
</organism>
<protein>
    <recommendedName>
        <fullName evidence="1">Chaperone protein DnaJ</fullName>
    </recommendedName>
</protein>
<keyword id="KW-0143">Chaperone</keyword>
<keyword id="KW-0963">Cytoplasm</keyword>
<keyword id="KW-0235">DNA replication</keyword>
<keyword id="KW-0479">Metal-binding</keyword>
<keyword id="KW-1185">Reference proteome</keyword>
<keyword id="KW-0677">Repeat</keyword>
<keyword id="KW-0346">Stress response</keyword>
<keyword id="KW-0862">Zinc</keyword>
<keyword id="KW-0863">Zinc-finger</keyword>
<sequence length="380" mass="41816">MSEDFYSVLGVSRDADEDEIKQAYRKKASEYHPDVSDDPNAEEKFKQVKKAKEVLLDDEKRRMYDQMGHERFQEAEKRGATDTDRGRGGMGGMGGGGMGGMNDIFEQFFGGGGRSQSRSGPRQGSDLKTRLKVDLEDAYHGVTKQLTVTRPEECPDCDGAGHPPDADSRTCSACDGRGQQTTVRQTALGRVQQTRECPQCDGKGTIYSETCSTCRGDGQVRNETTLQVEVPAGIRDGQTLRMDGEGAPGENGGRKGDLLVEIRIDDHETFERDGDDLRCRHPISFPQAVFGDTVEVPTLDGAVEMDVPAGTQSGETFRLRGKGMPRLKRRGHGDLYVQVRVVTPESLNEEQREALEAFAEAGGEEIDVEQGFFEKLKSSF</sequence>
<accession>Q3IUB7</accession>
<feature type="chain" id="PRO_1000085230" description="Chaperone protein DnaJ">
    <location>
        <begin position="1"/>
        <end position="380"/>
    </location>
</feature>
<feature type="domain" description="J" evidence="1">
    <location>
        <begin position="4"/>
        <end position="68"/>
    </location>
</feature>
<feature type="repeat" description="CXXCXGXG motif">
    <location>
        <begin position="154"/>
        <end position="161"/>
    </location>
</feature>
<feature type="repeat" description="CXXCXGXG motif">
    <location>
        <begin position="171"/>
        <end position="178"/>
    </location>
</feature>
<feature type="repeat" description="CXXCXGXG motif">
    <location>
        <begin position="197"/>
        <end position="204"/>
    </location>
</feature>
<feature type="repeat" description="CXXCXGXG motif">
    <location>
        <begin position="211"/>
        <end position="218"/>
    </location>
</feature>
<feature type="zinc finger region" description="CR-type" evidence="1">
    <location>
        <begin position="141"/>
        <end position="223"/>
    </location>
</feature>
<feature type="region of interest" description="Disordered" evidence="2">
    <location>
        <begin position="27"/>
        <end position="126"/>
    </location>
</feature>
<feature type="compositionally biased region" description="Basic and acidic residues" evidence="2">
    <location>
        <begin position="27"/>
        <end position="87"/>
    </location>
</feature>
<feature type="compositionally biased region" description="Gly residues" evidence="2">
    <location>
        <begin position="88"/>
        <end position="100"/>
    </location>
</feature>
<feature type="compositionally biased region" description="Low complexity" evidence="2">
    <location>
        <begin position="115"/>
        <end position="124"/>
    </location>
</feature>
<feature type="binding site" evidence="1">
    <location>
        <position position="154"/>
    </location>
    <ligand>
        <name>Zn(2+)</name>
        <dbReference type="ChEBI" id="CHEBI:29105"/>
        <label>1</label>
    </ligand>
</feature>
<feature type="binding site" evidence="1">
    <location>
        <position position="157"/>
    </location>
    <ligand>
        <name>Zn(2+)</name>
        <dbReference type="ChEBI" id="CHEBI:29105"/>
        <label>1</label>
    </ligand>
</feature>
<feature type="binding site" evidence="1">
    <location>
        <position position="171"/>
    </location>
    <ligand>
        <name>Zn(2+)</name>
        <dbReference type="ChEBI" id="CHEBI:29105"/>
        <label>2</label>
    </ligand>
</feature>
<feature type="binding site" evidence="1">
    <location>
        <position position="174"/>
    </location>
    <ligand>
        <name>Zn(2+)</name>
        <dbReference type="ChEBI" id="CHEBI:29105"/>
        <label>2</label>
    </ligand>
</feature>
<feature type="binding site" evidence="1">
    <location>
        <position position="197"/>
    </location>
    <ligand>
        <name>Zn(2+)</name>
        <dbReference type="ChEBI" id="CHEBI:29105"/>
        <label>2</label>
    </ligand>
</feature>
<feature type="binding site" evidence="1">
    <location>
        <position position="200"/>
    </location>
    <ligand>
        <name>Zn(2+)</name>
        <dbReference type="ChEBI" id="CHEBI:29105"/>
        <label>2</label>
    </ligand>
</feature>
<feature type="binding site" evidence="1">
    <location>
        <position position="211"/>
    </location>
    <ligand>
        <name>Zn(2+)</name>
        <dbReference type="ChEBI" id="CHEBI:29105"/>
        <label>1</label>
    </ligand>
</feature>
<feature type="binding site" evidence="1">
    <location>
        <position position="214"/>
    </location>
    <ligand>
        <name>Zn(2+)</name>
        <dbReference type="ChEBI" id="CHEBI:29105"/>
        <label>1</label>
    </ligand>
</feature>
<reference key="1">
    <citation type="journal article" date="2005" name="Genome Res.">
        <title>Living with two extremes: conclusions from the genome sequence of Natronomonas pharaonis.</title>
        <authorList>
            <person name="Falb M."/>
            <person name="Pfeiffer F."/>
            <person name="Palm P."/>
            <person name="Rodewald K."/>
            <person name="Hickmann V."/>
            <person name="Tittor J."/>
            <person name="Oesterhelt D."/>
        </authorList>
    </citation>
    <scope>NUCLEOTIDE SEQUENCE [LARGE SCALE GENOMIC DNA]</scope>
    <source>
        <strain>ATCC 35678 / DSM 2160 / CIP 103997 / JCM 8858 / NBRC 14720 / NCIMB 2260 / Gabara</strain>
    </source>
</reference>
<proteinExistence type="inferred from homology"/>
<gene>
    <name evidence="1" type="primary">dnaJ</name>
    <name type="ordered locus">NP_0346A</name>
</gene>
<name>DNAJ_NATPD</name>
<comment type="function">
    <text evidence="1">Participates actively in the response to hyperosmotic and heat shock by preventing the aggregation of stress-denatured proteins and by disaggregating proteins, also in an autonomous, DnaK-independent fashion. Unfolded proteins bind initially to DnaJ; upon interaction with the DnaJ-bound protein, DnaK hydrolyzes its bound ATP, resulting in the formation of a stable complex. GrpE releases ADP from DnaK; ATP binding to DnaK triggers the release of the substrate protein, thus completing the reaction cycle. Several rounds of ATP-dependent interactions between DnaJ, DnaK and GrpE are required for fully efficient folding. Also involved, together with DnaK and GrpE, in the DNA replication of plasmids through activation of initiation proteins.</text>
</comment>
<comment type="cofactor">
    <cofactor evidence="1">
        <name>Zn(2+)</name>
        <dbReference type="ChEBI" id="CHEBI:29105"/>
    </cofactor>
    <text evidence="1">Binds 2 Zn(2+) ions per monomer.</text>
</comment>
<comment type="subunit">
    <text evidence="1">Homodimer.</text>
</comment>
<comment type="subcellular location">
    <subcellularLocation>
        <location evidence="1">Cytoplasm</location>
    </subcellularLocation>
</comment>
<comment type="domain">
    <text evidence="1">The J domain is necessary and sufficient to stimulate DnaK ATPase activity. Zinc center 1 plays an important role in the autonomous, DnaK-independent chaperone activity of DnaJ. Zinc center 2 is essential for interaction with DnaK and for DnaJ activity.</text>
</comment>
<comment type="similarity">
    <text evidence="1">Belongs to the DnaJ family.</text>
</comment>